<accession>Q85X24</accession>
<protein>
    <recommendedName>
        <fullName evidence="1">ATP synthase subunit beta, chloroplastic</fullName>
        <ecNumber evidence="1">7.1.2.2</ecNumber>
    </recommendedName>
    <alternativeName>
        <fullName evidence="1">ATP synthase F1 sector subunit beta</fullName>
    </alternativeName>
    <alternativeName>
        <fullName evidence="1">F-ATPase subunit beta</fullName>
    </alternativeName>
</protein>
<sequence>MRTNPLVLGVSALVEKNVGYIAQIIGPVLDVSFSPGYMPNIYNSLKVQGQGTAGQEIQVTCEVQQLLGNHKVRAVAMSATDGLTRGMTVIDTGAPLSVPVGGATLGRIFNVLGEPVDNLGPVDARITSPIHRTAPAFTELDTKLSIFETGIKVVDLLAPYRRGGKIGLFGGAGVGKTVLIMELINNIAKAHGGVSVFGGVGERTREGNDLYMEMKESGVIDEQKISESKVALVYGQMNEPPGARMRVGLTALTMAEYFRDVNEQDVLLFIDNIFRFVQAGSEVSALLGRMPSAVGYQPTLSTEMGSLQERITSTKKGSITSIQAVYVPADDLTDPAPATTFAHLDATTVLSRGLAAKGIYPAVDPLDSTSTMLQPWIVGEEHYETAQGVKQTLQRYKELQDIIAIPGLDELSEEDRLIVARARKIERFLSQPFFVAEVFTGSPGKYVGLMETIRGFQMILSGELDGLTEQSFYLVGNIDEATVRLNSTGK</sequence>
<geneLocation type="chloroplast"/>
<name>ATPB_PINKO</name>
<organism>
    <name type="scientific">Pinus koraiensis</name>
    <name type="common">Korean pine</name>
    <dbReference type="NCBI Taxonomy" id="88728"/>
    <lineage>
        <taxon>Eukaryota</taxon>
        <taxon>Viridiplantae</taxon>
        <taxon>Streptophyta</taxon>
        <taxon>Embryophyta</taxon>
        <taxon>Tracheophyta</taxon>
        <taxon>Spermatophyta</taxon>
        <taxon>Pinopsida</taxon>
        <taxon>Pinidae</taxon>
        <taxon>Conifers I</taxon>
        <taxon>Pinales</taxon>
        <taxon>Pinaceae</taxon>
        <taxon>Pinus</taxon>
        <taxon>Pinus subgen. Strobus</taxon>
    </lineage>
</organism>
<keyword id="KW-0066">ATP synthesis</keyword>
<keyword id="KW-0067">ATP-binding</keyword>
<keyword id="KW-0139">CF(1)</keyword>
<keyword id="KW-0150">Chloroplast</keyword>
<keyword id="KW-0375">Hydrogen ion transport</keyword>
<keyword id="KW-0406">Ion transport</keyword>
<keyword id="KW-0472">Membrane</keyword>
<keyword id="KW-0547">Nucleotide-binding</keyword>
<keyword id="KW-0934">Plastid</keyword>
<keyword id="KW-0793">Thylakoid</keyword>
<keyword id="KW-1278">Translocase</keyword>
<keyword id="KW-0813">Transport</keyword>
<evidence type="ECO:0000255" key="1">
    <source>
        <dbReference type="HAMAP-Rule" id="MF_01347"/>
    </source>
</evidence>
<reference key="1">
    <citation type="submission" date="2003-02" db="EMBL/GenBank/DDBJ databases">
        <title>Complete nucleotide sequence of Pinus koraiensis.</title>
        <authorList>
            <person name="Noh E.W."/>
            <person name="Lee J.S."/>
            <person name="Choi Y.I."/>
            <person name="Han M.S."/>
            <person name="Yi Y.S."/>
            <person name="Han S.U."/>
        </authorList>
    </citation>
    <scope>NUCLEOTIDE SEQUENCE [LARGE SCALE GENOMIC DNA]</scope>
    <source>
        <strain>KangWon16</strain>
    </source>
</reference>
<dbReference type="EC" id="7.1.2.2" evidence="1"/>
<dbReference type="EMBL" id="AY228468">
    <property type="protein sequence ID" value="AAO74042.1"/>
    <property type="molecule type" value="Genomic_DNA"/>
</dbReference>
<dbReference type="RefSeq" id="NP_817194.1">
    <property type="nucleotide sequence ID" value="NC_004677.2"/>
</dbReference>
<dbReference type="SMR" id="Q85X24"/>
<dbReference type="GeneID" id="806940"/>
<dbReference type="GO" id="GO:0009535">
    <property type="term" value="C:chloroplast thylakoid membrane"/>
    <property type="evidence" value="ECO:0007669"/>
    <property type="project" value="UniProtKB-SubCell"/>
</dbReference>
<dbReference type="GO" id="GO:0005739">
    <property type="term" value="C:mitochondrion"/>
    <property type="evidence" value="ECO:0007669"/>
    <property type="project" value="GOC"/>
</dbReference>
<dbReference type="GO" id="GO:0045259">
    <property type="term" value="C:proton-transporting ATP synthase complex"/>
    <property type="evidence" value="ECO:0007669"/>
    <property type="project" value="UniProtKB-KW"/>
</dbReference>
<dbReference type="GO" id="GO:0005524">
    <property type="term" value="F:ATP binding"/>
    <property type="evidence" value="ECO:0007669"/>
    <property type="project" value="UniProtKB-UniRule"/>
</dbReference>
<dbReference type="GO" id="GO:0016887">
    <property type="term" value="F:ATP hydrolysis activity"/>
    <property type="evidence" value="ECO:0007669"/>
    <property type="project" value="InterPro"/>
</dbReference>
<dbReference type="GO" id="GO:0046933">
    <property type="term" value="F:proton-transporting ATP synthase activity, rotational mechanism"/>
    <property type="evidence" value="ECO:0007669"/>
    <property type="project" value="UniProtKB-UniRule"/>
</dbReference>
<dbReference type="GO" id="GO:0042776">
    <property type="term" value="P:proton motive force-driven mitochondrial ATP synthesis"/>
    <property type="evidence" value="ECO:0007669"/>
    <property type="project" value="TreeGrafter"/>
</dbReference>
<dbReference type="CDD" id="cd18110">
    <property type="entry name" value="ATP-synt_F1_beta_C"/>
    <property type="match status" value="1"/>
</dbReference>
<dbReference type="CDD" id="cd18115">
    <property type="entry name" value="ATP-synt_F1_beta_N"/>
    <property type="match status" value="1"/>
</dbReference>
<dbReference type="CDD" id="cd01133">
    <property type="entry name" value="F1-ATPase_beta_CD"/>
    <property type="match status" value="1"/>
</dbReference>
<dbReference type="FunFam" id="1.10.1140.10:FF:000001">
    <property type="entry name" value="ATP synthase subunit beta"/>
    <property type="match status" value="1"/>
</dbReference>
<dbReference type="FunFam" id="3.40.50.300:FF:000004">
    <property type="entry name" value="ATP synthase subunit beta"/>
    <property type="match status" value="1"/>
</dbReference>
<dbReference type="FunFam" id="2.40.10.170:FF:000002">
    <property type="entry name" value="ATP synthase subunit beta, chloroplastic"/>
    <property type="match status" value="1"/>
</dbReference>
<dbReference type="Gene3D" id="2.40.10.170">
    <property type="match status" value="1"/>
</dbReference>
<dbReference type="Gene3D" id="1.10.1140.10">
    <property type="entry name" value="Bovine Mitochondrial F1-atpase, Atp Synthase Beta Chain, Chain D, domain 3"/>
    <property type="match status" value="1"/>
</dbReference>
<dbReference type="Gene3D" id="3.40.50.300">
    <property type="entry name" value="P-loop containing nucleotide triphosphate hydrolases"/>
    <property type="match status" value="1"/>
</dbReference>
<dbReference type="HAMAP" id="MF_01347">
    <property type="entry name" value="ATP_synth_beta_bact"/>
    <property type="match status" value="1"/>
</dbReference>
<dbReference type="InterPro" id="IPR003593">
    <property type="entry name" value="AAA+_ATPase"/>
</dbReference>
<dbReference type="InterPro" id="IPR055190">
    <property type="entry name" value="ATP-synt_VA_C"/>
</dbReference>
<dbReference type="InterPro" id="IPR005722">
    <property type="entry name" value="ATP_synth_F1_bsu"/>
</dbReference>
<dbReference type="InterPro" id="IPR020003">
    <property type="entry name" value="ATPase_a/bsu_AS"/>
</dbReference>
<dbReference type="InterPro" id="IPR050053">
    <property type="entry name" value="ATPase_alpha/beta_chains"/>
</dbReference>
<dbReference type="InterPro" id="IPR004100">
    <property type="entry name" value="ATPase_F1/V1/A1_a/bsu_N"/>
</dbReference>
<dbReference type="InterPro" id="IPR036121">
    <property type="entry name" value="ATPase_F1/V1/A1_a/bsu_N_sf"/>
</dbReference>
<dbReference type="InterPro" id="IPR000194">
    <property type="entry name" value="ATPase_F1/V1/A1_a/bsu_nucl-bd"/>
</dbReference>
<dbReference type="InterPro" id="IPR024034">
    <property type="entry name" value="ATPase_F1/V1_b/a_C"/>
</dbReference>
<dbReference type="InterPro" id="IPR027417">
    <property type="entry name" value="P-loop_NTPase"/>
</dbReference>
<dbReference type="NCBIfam" id="TIGR01039">
    <property type="entry name" value="atpD"/>
    <property type="match status" value="1"/>
</dbReference>
<dbReference type="PANTHER" id="PTHR15184">
    <property type="entry name" value="ATP SYNTHASE"/>
    <property type="match status" value="1"/>
</dbReference>
<dbReference type="PANTHER" id="PTHR15184:SF71">
    <property type="entry name" value="ATP SYNTHASE SUBUNIT BETA, MITOCHONDRIAL"/>
    <property type="match status" value="1"/>
</dbReference>
<dbReference type="Pfam" id="PF00006">
    <property type="entry name" value="ATP-synt_ab"/>
    <property type="match status" value="1"/>
</dbReference>
<dbReference type="Pfam" id="PF02874">
    <property type="entry name" value="ATP-synt_ab_N"/>
    <property type="match status" value="1"/>
</dbReference>
<dbReference type="Pfam" id="PF22919">
    <property type="entry name" value="ATP-synt_VA_C"/>
    <property type="match status" value="1"/>
</dbReference>
<dbReference type="SMART" id="SM00382">
    <property type="entry name" value="AAA"/>
    <property type="match status" value="1"/>
</dbReference>
<dbReference type="SUPFAM" id="SSF47917">
    <property type="entry name" value="C-terminal domain of alpha and beta subunits of F1 ATP synthase"/>
    <property type="match status" value="1"/>
</dbReference>
<dbReference type="SUPFAM" id="SSF50615">
    <property type="entry name" value="N-terminal domain of alpha and beta subunits of F1 ATP synthase"/>
    <property type="match status" value="1"/>
</dbReference>
<dbReference type="SUPFAM" id="SSF52540">
    <property type="entry name" value="P-loop containing nucleoside triphosphate hydrolases"/>
    <property type="match status" value="1"/>
</dbReference>
<dbReference type="PROSITE" id="PS00152">
    <property type="entry name" value="ATPASE_ALPHA_BETA"/>
    <property type="match status" value="1"/>
</dbReference>
<comment type="function">
    <text evidence="1">Produces ATP from ADP in the presence of a proton gradient across the membrane. The catalytic sites are hosted primarily by the beta subunits.</text>
</comment>
<comment type="catalytic activity">
    <reaction evidence="1">
        <text>ATP + H2O + 4 H(+)(in) = ADP + phosphate + 5 H(+)(out)</text>
        <dbReference type="Rhea" id="RHEA:57720"/>
        <dbReference type="ChEBI" id="CHEBI:15377"/>
        <dbReference type="ChEBI" id="CHEBI:15378"/>
        <dbReference type="ChEBI" id="CHEBI:30616"/>
        <dbReference type="ChEBI" id="CHEBI:43474"/>
        <dbReference type="ChEBI" id="CHEBI:456216"/>
        <dbReference type="EC" id="7.1.2.2"/>
    </reaction>
</comment>
<comment type="subunit">
    <text evidence="1">F-type ATPases have 2 components, CF(1) - the catalytic core - and CF(0) - the membrane proton channel. CF(1) has five subunits: alpha(3), beta(3), gamma(1), delta(1), epsilon(1). CF(0) has four main subunits: a(1), b(1), b'(1) and c(9-12).</text>
</comment>
<comment type="subcellular location">
    <subcellularLocation>
        <location evidence="1">Plastid</location>
        <location evidence="1">Chloroplast thylakoid membrane</location>
        <topology evidence="1">Peripheral membrane protein</topology>
    </subcellularLocation>
</comment>
<comment type="similarity">
    <text evidence="1">Belongs to the ATPase alpha/beta chains family.</text>
</comment>
<proteinExistence type="inferred from homology"/>
<gene>
    <name evidence="1" type="primary">atpB</name>
</gene>
<feature type="chain" id="PRO_0000254512" description="ATP synthase subunit beta, chloroplastic">
    <location>
        <begin position="1"/>
        <end position="490"/>
    </location>
</feature>
<feature type="binding site" evidence="1">
    <location>
        <begin position="170"/>
        <end position="177"/>
    </location>
    <ligand>
        <name>ATP</name>
        <dbReference type="ChEBI" id="CHEBI:30616"/>
    </ligand>
</feature>